<feature type="chain" id="PRO_1000092742" description="ATP phosphoribosyltransferase">
    <location>
        <begin position="1"/>
        <end position="299"/>
    </location>
</feature>
<dbReference type="EC" id="2.4.2.17" evidence="1"/>
<dbReference type="EMBL" id="AM942759">
    <property type="protein sequence ID" value="CAR41554.1"/>
    <property type="molecule type" value="Genomic_DNA"/>
</dbReference>
<dbReference type="RefSeq" id="WP_004244529.1">
    <property type="nucleotide sequence ID" value="NC_010554.1"/>
</dbReference>
<dbReference type="SMR" id="B4ET04"/>
<dbReference type="EnsemblBacteria" id="CAR41554">
    <property type="protein sequence ID" value="CAR41554"/>
    <property type="gene ID" value="PMI0665"/>
</dbReference>
<dbReference type="GeneID" id="6800177"/>
<dbReference type="KEGG" id="pmr:PMI0665"/>
<dbReference type="eggNOG" id="COG0040">
    <property type="taxonomic scope" value="Bacteria"/>
</dbReference>
<dbReference type="HOGENOM" id="CLU_038115_1_0_6"/>
<dbReference type="UniPathway" id="UPA00031">
    <property type="reaction ID" value="UER00006"/>
</dbReference>
<dbReference type="Proteomes" id="UP000008319">
    <property type="component" value="Chromosome"/>
</dbReference>
<dbReference type="GO" id="GO:0005737">
    <property type="term" value="C:cytoplasm"/>
    <property type="evidence" value="ECO:0007669"/>
    <property type="project" value="UniProtKB-SubCell"/>
</dbReference>
<dbReference type="GO" id="GO:0005524">
    <property type="term" value="F:ATP binding"/>
    <property type="evidence" value="ECO:0007669"/>
    <property type="project" value="UniProtKB-KW"/>
</dbReference>
<dbReference type="GO" id="GO:0003879">
    <property type="term" value="F:ATP phosphoribosyltransferase activity"/>
    <property type="evidence" value="ECO:0007669"/>
    <property type="project" value="UniProtKB-UniRule"/>
</dbReference>
<dbReference type="GO" id="GO:0000287">
    <property type="term" value="F:magnesium ion binding"/>
    <property type="evidence" value="ECO:0007669"/>
    <property type="project" value="UniProtKB-UniRule"/>
</dbReference>
<dbReference type="GO" id="GO:0000105">
    <property type="term" value="P:L-histidine biosynthetic process"/>
    <property type="evidence" value="ECO:0007669"/>
    <property type="project" value="UniProtKB-UniRule"/>
</dbReference>
<dbReference type="CDD" id="cd13592">
    <property type="entry name" value="PBP2_HisGL2"/>
    <property type="match status" value="1"/>
</dbReference>
<dbReference type="FunFam" id="3.30.70.120:FF:000002">
    <property type="entry name" value="ATP phosphoribosyltransferase"/>
    <property type="match status" value="1"/>
</dbReference>
<dbReference type="FunFam" id="3.40.190.10:FF:000008">
    <property type="entry name" value="ATP phosphoribosyltransferase"/>
    <property type="match status" value="1"/>
</dbReference>
<dbReference type="Gene3D" id="3.30.70.120">
    <property type="match status" value="1"/>
</dbReference>
<dbReference type="Gene3D" id="3.40.190.10">
    <property type="entry name" value="Periplasmic binding protein-like II"/>
    <property type="match status" value="2"/>
</dbReference>
<dbReference type="HAMAP" id="MF_00079">
    <property type="entry name" value="HisG_Long"/>
    <property type="match status" value="1"/>
</dbReference>
<dbReference type="InterPro" id="IPR020621">
    <property type="entry name" value="ATP-PRT_HisG_long"/>
</dbReference>
<dbReference type="InterPro" id="IPR013820">
    <property type="entry name" value="ATP_PRibTrfase_cat"/>
</dbReference>
<dbReference type="InterPro" id="IPR018198">
    <property type="entry name" value="ATP_PRibTrfase_CS"/>
</dbReference>
<dbReference type="InterPro" id="IPR001348">
    <property type="entry name" value="ATP_PRibTrfase_HisG"/>
</dbReference>
<dbReference type="InterPro" id="IPR013115">
    <property type="entry name" value="HisG_C"/>
</dbReference>
<dbReference type="InterPro" id="IPR011322">
    <property type="entry name" value="N-reg_PII-like_a/b"/>
</dbReference>
<dbReference type="InterPro" id="IPR015867">
    <property type="entry name" value="N-reg_PII/ATP_PRibTrfase_C"/>
</dbReference>
<dbReference type="NCBIfam" id="TIGR00070">
    <property type="entry name" value="hisG"/>
    <property type="match status" value="1"/>
</dbReference>
<dbReference type="NCBIfam" id="TIGR03455">
    <property type="entry name" value="HisG_C-term"/>
    <property type="match status" value="1"/>
</dbReference>
<dbReference type="PANTHER" id="PTHR21403:SF8">
    <property type="entry name" value="ATP PHOSPHORIBOSYLTRANSFERASE"/>
    <property type="match status" value="1"/>
</dbReference>
<dbReference type="PANTHER" id="PTHR21403">
    <property type="entry name" value="ATP PHOSPHORIBOSYLTRANSFERASE ATP-PRTASE"/>
    <property type="match status" value="1"/>
</dbReference>
<dbReference type="Pfam" id="PF01634">
    <property type="entry name" value="HisG"/>
    <property type="match status" value="1"/>
</dbReference>
<dbReference type="Pfam" id="PF08029">
    <property type="entry name" value="HisG_C"/>
    <property type="match status" value="1"/>
</dbReference>
<dbReference type="SUPFAM" id="SSF54913">
    <property type="entry name" value="GlnB-like"/>
    <property type="match status" value="1"/>
</dbReference>
<dbReference type="SUPFAM" id="SSF53850">
    <property type="entry name" value="Periplasmic binding protein-like II"/>
    <property type="match status" value="1"/>
</dbReference>
<dbReference type="PROSITE" id="PS01316">
    <property type="entry name" value="ATP_P_PHORIBOSYLTR"/>
    <property type="match status" value="1"/>
</dbReference>
<reference key="1">
    <citation type="journal article" date="2008" name="J. Bacteriol.">
        <title>Complete genome sequence of uropathogenic Proteus mirabilis, a master of both adherence and motility.</title>
        <authorList>
            <person name="Pearson M.M."/>
            <person name="Sebaihia M."/>
            <person name="Churcher C."/>
            <person name="Quail M.A."/>
            <person name="Seshasayee A.S."/>
            <person name="Luscombe N.M."/>
            <person name="Abdellah Z."/>
            <person name="Arrosmith C."/>
            <person name="Atkin B."/>
            <person name="Chillingworth T."/>
            <person name="Hauser H."/>
            <person name="Jagels K."/>
            <person name="Moule S."/>
            <person name="Mungall K."/>
            <person name="Norbertczak H."/>
            <person name="Rabbinowitsch E."/>
            <person name="Walker D."/>
            <person name="Whithead S."/>
            <person name="Thomson N.R."/>
            <person name="Rather P.N."/>
            <person name="Parkhill J."/>
            <person name="Mobley H.L.T."/>
        </authorList>
    </citation>
    <scope>NUCLEOTIDE SEQUENCE [LARGE SCALE GENOMIC DNA]</scope>
    <source>
        <strain>HI4320</strain>
    </source>
</reference>
<evidence type="ECO:0000255" key="1">
    <source>
        <dbReference type="HAMAP-Rule" id="MF_00079"/>
    </source>
</evidence>
<sequence length="299" mass="33148">MLDKARLRIAMQKSGRLSDDSRALLARCGIKINLNQQRLIAYAENMPIDILRVRDDDIPGLVMDGVVDLGIIGENVLEEELLKRRAQGENPSYITLRRLDFGACRLSLAAPVDFDYQGVECLNNTRIATSYPNLLKRYLDQKGITFKSCLLNGSVEVAPRAGLADSICDLVSTGATLEANGLKEVEVIYRSKACLIQRDGEMDATKQALIDRLMTRIQGVIQARESKYIMLHAPSDCLEDVIALLPGAERPTILPLAGDQNRVAMHMVSSETLFWETMEKLKALGASSILVLPIEKMME</sequence>
<comment type="function">
    <text evidence="1">Catalyzes the condensation of ATP and 5-phosphoribose 1-diphosphate to form N'-(5'-phosphoribosyl)-ATP (PR-ATP). Has a crucial role in the pathway because the rate of histidine biosynthesis seems to be controlled primarily by regulation of HisG enzymatic activity.</text>
</comment>
<comment type="catalytic activity">
    <reaction evidence="1">
        <text>1-(5-phospho-beta-D-ribosyl)-ATP + diphosphate = 5-phospho-alpha-D-ribose 1-diphosphate + ATP</text>
        <dbReference type="Rhea" id="RHEA:18473"/>
        <dbReference type="ChEBI" id="CHEBI:30616"/>
        <dbReference type="ChEBI" id="CHEBI:33019"/>
        <dbReference type="ChEBI" id="CHEBI:58017"/>
        <dbReference type="ChEBI" id="CHEBI:73183"/>
        <dbReference type="EC" id="2.4.2.17"/>
    </reaction>
</comment>
<comment type="cofactor">
    <cofactor evidence="1">
        <name>Mg(2+)</name>
        <dbReference type="ChEBI" id="CHEBI:18420"/>
    </cofactor>
</comment>
<comment type="activity regulation">
    <text evidence="1">Feedback inhibited by histidine.</text>
</comment>
<comment type="pathway">
    <text evidence="1">Amino-acid biosynthesis; L-histidine biosynthesis; L-histidine from 5-phospho-alpha-D-ribose 1-diphosphate: step 1/9.</text>
</comment>
<comment type="subunit">
    <text evidence="1">Equilibrium between an active dimeric form, an inactive hexameric form and higher aggregates. Interconversion between the various forms is largely reversible and is influenced by the natural substrates and inhibitors of the enzyme.</text>
</comment>
<comment type="subcellular location">
    <subcellularLocation>
        <location evidence="1">Cytoplasm</location>
    </subcellularLocation>
</comment>
<comment type="similarity">
    <text evidence="1">Belongs to the ATP phosphoribosyltransferase family. Long subfamily.</text>
</comment>
<gene>
    <name evidence="1" type="primary">hisG</name>
    <name type="ordered locus">PMI0665</name>
</gene>
<keyword id="KW-0028">Amino-acid biosynthesis</keyword>
<keyword id="KW-0067">ATP-binding</keyword>
<keyword id="KW-0963">Cytoplasm</keyword>
<keyword id="KW-0328">Glycosyltransferase</keyword>
<keyword id="KW-0368">Histidine biosynthesis</keyword>
<keyword id="KW-0460">Magnesium</keyword>
<keyword id="KW-0479">Metal-binding</keyword>
<keyword id="KW-0547">Nucleotide-binding</keyword>
<keyword id="KW-1185">Reference proteome</keyword>
<keyword id="KW-0808">Transferase</keyword>
<accession>B4ET04</accession>
<name>HIS1_PROMH</name>
<proteinExistence type="inferred from homology"/>
<protein>
    <recommendedName>
        <fullName evidence="1">ATP phosphoribosyltransferase</fullName>
        <shortName evidence="1">ATP-PRT</shortName>
        <shortName evidence="1">ATP-PRTase</shortName>
        <ecNumber evidence="1">2.4.2.17</ecNumber>
    </recommendedName>
</protein>
<organism>
    <name type="scientific">Proteus mirabilis (strain HI4320)</name>
    <dbReference type="NCBI Taxonomy" id="529507"/>
    <lineage>
        <taxon>Bacteria</taxon>
        <taxon>Pseudomonadati</taxon>
        <taxon>Pseudomonadota</taxon>
        <taxon>Gammaproteobacteria</taxon>
        <taxon>Enterobacterales</taxon>
        <taxon>Morganellaceae</taxon>
        <taxon>Proteus</taxon>
    </lineage>
</organism>